<feature type="chain" id="PRO_0000098059" description="Urease subunit gamma">
    <location>
        <begin position="1"/>
        <end position="100"/>
    </location>
</feature>
<dbReference type="EC" id="3.5.1.5" evidence="1"/>
<dbReference type="EMBL" id="AY363680">
    <property type="protein sequence ID" value="AAR15084.1"/>
    <property type="molecule type" value="Genomic_DNA"/>
</dbReference>
<dbReference type="RefSeq" id="WP_042547974.1">
    <property type="nucleotide sequence ID" value="NZ_CQEJ01000022.1"/>
</dbReference>
<dbReference type="SMR" id="Q6UR86"/>
<dbReference type="STRING" id="1453495.AT01_3434"/>
<dbReference type="eggNOG" id="COG0831">
    <property type="taxonomic scope" value="Bacteria"/>
</dbReference>
<dbReference type="OrthoDB" id="9797217at2"/>
<dbReference type="UniPathway" id="UPA00258">
    <property type="reaction ID" value="UER00370"/>
</dbReference>
<dbReference type="GO" id="GO:0005737">
    <property type="term" value="C:cytoplasm"/>
    <property type="evidence" value="ECO:0007669"/>
    <property type="project" value="UniProtKB-SubCell"/>
</dbReference>
<dbReference type="GO" id="GO:0016151">
    <property type="term" value="F:nickel cation binding"/>
    <property type="evidence" value="ECO:0007669"/>
    <property type="project" value="InterPro"/>
</dbReference>
<dbReference type="GO" id="GO:0009039">
    <property type="term" value="F:urease activity"/>
    <property type="evidence" value="ECO:0007669"/>
    <property type="project" value="UniProtKB-UniRule"/>
</dbReference>
<dbReference type="GO" id="GO:0043419">
    <property type="term" value="P:urea catabolic process"/>
    <property type="evidence" value="ECO:0007669"/>
    <property type="project" value="UniProtKB-UniRule"/>
</dbReference>
<dbReference type="CDD" id="cd00390">
    <property type="entry name" value="Urease_gamma"/>
    <property type="match status" value="1"/>
</dbReference>
<dbReference type="Gene3D" id="3.30.280.10">
    <property type="entry name" value="Urease, gamma-like subunit"/>
    <property type="match status" value="1"/>
</dbReference>
<dbReference type="HAMAP" id="MF_00739">
    <property type="entry name" value="Urease_gamma"/>
    <property type="match status" value="1"/>
</dbReference>
<dbReference type="InterPro" id="IPR012010">
    <property type="entry name" value="Urease_gamma"/>
</dbReference>
<dbReference type="InterPro" id="IPR002026">
    <property type="entry name" value="Urease_gamma/gamma-beta_su"/>
</dbReference>
<dbReference type="InterPro" id="IPR036463">
    <property type="entry name" value="Urease_gamma_sf"/>
</dbReference>
<dbReference type="InterPro" id="IPR050069">
    <property type="entry name" value="Urease_subunit"/>
</dbReference>
<dbReference type="NCBIfam" id="NF009712">
    <property type="entry name" value="PRK13241.1"/>
    <property type="match status" value="1"/>
</dbReference>
<dbReference type="NCBIfam" id="TIGR00193">
    <property type="entry name" value="urease_gam"/>
    <property type="match status" value="1"/>
</dbReference>
<dbReference type="PANTHER" id="PTHR33569">
    <property type="entry name" value="UREASE"/>
    <property type="match status" value="1"/>
</dbReference>
<dbReference type="PANTHER" id="PTHR33569:SF1">
    <property type="entry name" value="UREASE"/>
    <property type="match status" value="1"/>
</dbReference>
<dbReference type="Pfam" id="PF00547">
    <property type="entry name" value="Urease_gamma"/>
    <property type="match status" value="1"/>
</dbReference>
<dbReference type="PIRSF" id="PIRSF001223">
    <property type="entry name" value="Urease_gamma"/>
    <property type="match status" value="1"/>
</dbReference>
<dbReference type="SUPFAM" id="SSF54111">
    <property type="entry name" value="Urease, gamma-subunit"/>
    <property type="match status" value="1"/>
</dbReference>
<protein>
    <recommendedName>
        <fullName evidence="1">Urease subunit gamma</fullName>
        <ecNumber evidence="1">3.5.1.5</ecNumber>
    </recommendedName>
    <alternativeName>
        <fullName evidence="1">Urea amidohydrolase subunit gamma</fullName>
    </alternativeName>
</protein>
<proteinExistence type="inferred from homology"/>
<organism>
    <name type="scientific">Yersinia aldovae</name>
    <dbReference type="NCBI Taxonomy" id="29483"/>
    <lineage>
        <taxon>Bacteria</taxon>
        <taxon>Pseudomonadati</taxon>
        <taxon>Pseudomonadota</taxon>
        <taxon>Gammaproteobacteria</taxon>
        <taxon>Enterobacterales</taxon>
        <taxon>Yersiniaceae</taxon>
        <taxon>Yersinia</taxon>
    </lineage>
</organism>
<keyword id="KW-0963">Cytoplasm</keyword>
<keyword id="KW-0378">Hydrolase</keyword>
<accession>Q6UR86</accession>
<comment type="catalytic activity">
    <reaction evidence="1">
        <text>urea + 2 H2O + H(+) = hydrogencarbonate + 2 NH4(+)</text>
        <dbReference type="Rhea" id="RHEA:20557"/>
        <dbReference type="ChEBI" id="CHEBI:15377"/>
        <dbReference type="ChEBI" id="CHEBI:15378"/>
        <dbReference type="ChEBI" id="CHEBI:16199"/>
        <dbReference type="ChEBI" id="CHEBI:17544"/>
        <dbReference type="ChEBI" id="CHEBI:28938"/>
        <dbReference type="EC" id="3.5.1.5"/>
    </reaction>
</comment>
<comment type="pathway">
    <text evidence="1">Nitrogen metabolism; urea degradation; CO(2) and NH(3) from urea (urease route): step 1/1.</text>
</comment>
<comment type="subunit">
    <text evidence="1">Heterotrimer of UreA (gamma), UreB (beta) and UreC (alpha) subunits. Three heterotrimers associate to form the active enzyme.</text>
</comment>
<comment type="subcellular location">
    <subcellularLocation>
        <location evidence="1">Cytoplasm</location>
    </subcellularLocation>
</comment>
<comment type="similarity">
    <text evidence="1">Belongs to the urease gamma subunit family.</text>
</comment>
<gene>
    <name evidence="1" type="primary">ureA</name>
</gene>
<evidence type="ECO:0000255" key="1">
    <source>
        <dbReference type="HAMAP-Rule" id="MF_00739"/>
    </source>
</evidence>
<reference key="1">
    <citation type="submission" date="2003-08" db="EMBL/GenBank/DDBJ databases">
        <title>Yersinia aldovae urease gene locus (ureABCEFGD) and urea transporter gene (yut).</title>
        <authorList>
            <person name="Sebbane F."/>
            <person name="Lemaitre N."/>
            <person name="Simonet M."/>
        </authorList>
    </citation>
    <scope>NUCLEOTIDE SEQUENCE [GENOMIC DNA]</scope>
</reference>
<name>URE3_YERAL</name>
<sequence>MQLTPREVEKLMIYTLSDVAFKRKARGLKLNYPEAVSIITVTAMEGARDGKSVEDVMKEASQVLTKDDVMDGVADLIPNVQVEAIFTDGSRLVTVHDPIK</sequence>